<dbReference type="EC" id="2.7.1.24" evidence="1"/>
<dbReference type="EMBL" id="AF268318">
    <property type="protein sequence ID" value="AAF89192.1"/>
    <property type="molecule type" value="Genomic_DNA"/>
</dbReference>
<dbReference type="RefSeq" id="WP_005547548.1">
    <property type="nucleotide sequence ID" value="NZ_VSEW01000003.1"/>
</dbReference>
<dbReference type="SMR" id="Q9JRM6"/>
<dbReference type="STRING" id="714.ACT75_07170"/>
<dbReference type="GeneID" id="77210558"/>
<dbReference type="eggNOG" id="COG0237">
    <property type="taxonomic scope" value="Bacteria"/>
</dbReference>
<dbReference type="eggNOG" id="COG3024">
    <property type="taxonomic scope" value="Bacteria"/>
</dbReference>
<dbReference type="OMA" id="CQMDIEQ"/>
<dbReference type="UniPathway" id="UPA00241">
    <property type="reaction ID" value="UER00356"/>
</dbReference>
<dbReference type="GO" id="GO:0005737">
    <property type="term" value="C:cytoplasm"/>
    <property type="evidence" value="ECO:0007669"/>
    <property type="project" value="UniProtKB-SubCell"/>
</dbReference>
<dbReference type="GO" id="GO:0005524">
    <property type="term" value="F:ATP binding"/>
    <property type="evidence" value="ECO:0007669"/>
    <property type="project" value="UniProtKB-UniRule"/>
</dbReference>
<dbReference type="GO" id="GO:0004140">
    <property type="term" value="F:dephospho-CoA kinase activity"/>
    <property type="evidence" value="ECO:0007669"/>
    <property type="project" value="UniProtKB-UniRule"/>
</dbReference>
<dbReference type="GO" id="GO:0015937">
    <property type="term" value="P:coenzyme A biosynthetic process"/>
    <property type="evidence" value="ECO:0007669"/>
    <property type="project" value="UniProtKB-UniRule"/>
</dbReference>
<dbReference type="CDD" id="cd02022">
    <property type="entry name" value="DPCK"/>
    <property type="match status" value="1"/>
</dbReference>
<dbReference type="FunFam" id="3.40.50.300:FF:000518">
    <property type="entry name" value="Dephospho-CoA kinase"/>
    <property type="match status" value="1"/>
</dbReference>
<dbReference type="Gene3D" id="3.40.50.300">
    <property type="entry name" value="P-loop containing nucleotide triphosphate hydrolases"/>
    <property type="match status" value="1"/>
</dbReference>
<dbReference type="HAMAP" id="MF_00376">
    <property type="entry name" value="Dephospho_CoA_kinase"/>
    <property type="match status" value="1"/>
</dbReference>
<dbReference type="InterPro" id="IPR001977">
    <property type="entry name" value="Depp_CoAkinase"/>
</dbReference>
<dbReference type="InterPro" id="IPR027417">
    <property type="entry name" value="P-loop_NTPase"/>
</dbReference>
<dbReference type="NCBIfam" id="TIGR00152">
    <property type="entry name" value="dephospho-CoA kinase"/>
    <property type="match status" value="1"/>
</dbReference>
<dbReference type="PANTHER" id="PTHR10695:SF46">
    <property type="entry name" value="BIFUNCTIONAL COENZYME A SYNTHASE-RELATED"/>
    <property type="match status" value="1"/>
</dbReference>
<dbReference type="PANTHER" id="PTHR10695">
    <property type="entry name" value="DEPHOSPHO-COA KINASE-RELATED"/>
    <property type="match status" value="1"/>
</dbReference>
<dbReference type="Pfam" id="PF01121">
    <property type="entry name" value="CoaE"/>
    <property type="match status" value="1"/>
</dbReference>
<dbReference type="SUPFAM" id="SSF52540">
    <property type="entry name" value="P-loop containing nucleoside triphosphate hydrolases"/>
    <property type="match status" value="1"/>
</dbReference>
<dbReference type="PROSITE" id="PS51219">
    <property type="entry name" value="DPCK"/>
    <property type="match status" value="1"/>
</dbReference>
<sequence length="207" mass="23357">MTYVVGLTGGIGSGKSTVADLFAELGVSVIDADVVARQVVEKGSPLLAEIAEHFGEEILLADGSLNRTALREKVFADESQKQWLNQLLHPAIRREMLKQLAVQRAPYCLFVVPLLIENKLTALCQRILVVDVSEQTQLERANRRDNNQLALIKNIMQSQVSRAERLKYADDVINNDEDLARNLPQLKQKVLDLHHLYLQFAEIFNER</sequence>
<name>COAE_AGGAC</name>
<evidence type="ECO:0000255" key="1">
    <source>
        <dbReference type="HAMAP-Rule" id="MF_00376"/>
    </source>
</evidence>
<evidence type="ECO:0000305" key="2"/>
<accession>Q9JRM6</accession>
<reference key="1">
    <citation type="submission" date="2000-05" db="EMBL/GenBank/DDBJ databases">
        <title>Cloning and characterization of a new type IV fimbriae gene cluster of Actinobacillus actinomycetemcomitans.</title>
        <authorList>
            <person name="Wu H."/>
            <person name="Fives-Taylor P.M."/>
        </authorList>
    </citation>
    <scope>NUCLEOTIDE SEQUENCE [GENOMIC DNA]</scope>
    <source>
        <strain>SUNY 465</strain>
    </source>
</reference>
<feature type="chain" id="PRO_0000172896" description="Dephospho-CoA kinase">
    <location>
        <begin position="1"/>
        <end position="207"/>
    </location>
</feature>
<feature type="domain" description="DPCK" evidence="1">
    <location>
        <begin position="4"/>
        <end position="204"/>
    </location>
</feature>
<feature type="binding site" evidence="1">
    <location>
        <begin position="12"/>
        <end position="17"/>
    </location>
    <ligand>
        <name>ATP</name>
        <dbReference type="ChEBI" id="CHEBI:30616"/>
    </ligand>
</feature>
<protein>
    <recommendedName>
        <fullName evidence="1">Dephospho-CoA kinase</fullName>
        <ecNumber evidence="1">2.7.1.24</ecNumber>
    </recommendedName>
    <alternativeName>
        <fullName evidence="1">Dephosphocoenzyme A kinase</fullName>
    </alternativeName>
</protein>
<keyword id="KW-0067">ATP-binding</keyword>
<keyword id="KW-0173">Coenzyme A biosynthesis</keyword>
<keyword id="KW-0963">Cytoplasm</keyword>
<keyword id="KW-0418">Kinase</keyword>
<keyword id="KW-0547">Nucleotide-binding</keyword>
<keyword id="KW-0808">Transferase</keyword>
<organism>
    <name type="scientific">Aggregatibacter actinomycetemcomitans</name>
    <name type="common">Actinobacillus actinomycetemcomitans</name>
    <name type="synonym">Haemophilus actinomycetemcomitans</name>
    <dbReference type="NCBI Taxonomy" id="714"/>
    <lineage>
        <taxon>Bacteria</taxon>
        <taxon>Pseudomonadati</taxon>
        <taxon>Pseudomonadota</taxon>
        <taxon>Gammaproteobacteria</taxon>
        <taxon>Pasteurellales</taxon>
        <taxon>Pasteurellaceae</taxon>
        <taxon>Aggregatibacter</taxon>
    </lineage>
</organism>
<comment type="function">
    <text evidence="1">Catalyzes the phosphorylation of the 3'-hydroxyl group of dephosphocoenzyme A to form coenzyme A.</text>
</comment>
<comment type="catalytic activity">
    <reaction evidence="1">
        <text>3'-dephospho-CoA + ATP = ADP + CoA + H(+)</text>
        <dbReference type="Rhea" id="RHEA:18245"/>
        <dbReference type="ChEBI" id="CHEBI:15378"/>
        <dbReference type="ChEBI" id="CHEBI:30616"/>
        <dbReference type="ChEBI" id="CHEBI:57287"/>
        <dbReference type="ChEBI" id="CHEBI:57328"/>
        <dbReference type="ChEBI" id="CHEBI:456216"/>
        <dbReference type="EC" id="2.7.1.24"/>
    </reaction>
</comment>
<comment type="pathway">
    <text evidence="1">Cofactor biosynthesis; coenzyme A biosynthesis; CoA from (R)-pantothenate: step 5/5.</text>
</comment>
<comment type="subcellular location">
    <subcellularLocation>
        <location evidence="1">Cytoplasm</location>
    </subcellularLocation>
</comment>
<comment type="similarity">
    <text evidence="1 2">Belongs to the CoaE family.</text>
</comment>
<gene>
    <name evidence="1" type="primary">coaE</name>
</gene>
<proteinExistence type="inferred from homology"/>